<proteinExistence type="inferred from homology"/>
<evidence type="ECO:0000255" key="1">
    <source>
        <dbReference type="HAMAP-Rule" id="MF_01599"/>
    </source>
</evidence>
<accession>A4WBF5</accession>
<gene>
    <name evidence="1" type="primary">nhaB</name>
    <name type="ordered locus">Ent638_2366</name>
</gene>
<reference key="1">
    <citation type="journal article" date="2010" name="PLoS Genet.">
        <title>Genome sequence of the plant growth promoting endophytic bacterium Enterobacter sp. 638.</title>
        <authorList>
            <person name="Taghavi S."/>
            <person name="van der Lelie D."/>
            <person name="Hoffman A."/>
            <person name="Zhang Y.B."/>
            <person name="Walla M.D."/>
            <person name="Vangronsveld J."/>
            <person name="Newman L."/>
            <person name="Monchy S."/>
        </authorList>
    </citation>
    <scope>NUCLEOTIDE SEQUENCE [LARGE SCALE GENOMIC DNA]</scope>
    <source>
        <strain>638</strain>
    </source>
</reference>
<sequence length="512" mass="56101">MEISYGRALWRNFLGQSPDWYKLTLLAFLIINPLVFIFQPFMAGWLLVAEFIFTLAMALKCYPLLPGGLLAIEAVVIGMTSAERVKDELATNLEVLLLLMFMVAGIYFMKQLLLFIFTRLLLSIRSKTVLSLSFCLAAAFLSAFLDALTVVAVVISVAIGFYGIYHRVASSSSDNDLQDDSQLDVNKRDVLEQFRAFLRSLMMHAGVGTALGGVMTMVGEPQNLIIAKAAGWNFTEFFLRVAPVSVPVFICGMLTCFLLERTKTFGYGVQLPGAVRDVLHEFDLKSRSQRTRQEKLALIAQGIIGAWLIFALAFHLAEVGLIGLSVIILATSFTGVTDEHAIGKAFTEALPFTALLAVFFAIVAVIIDQQLFTPIIHFVLQASPDSQLSLFYLFNGLLSSISDNVFVGSVYINEAKTALESGAIGINQFELLAVAINTGTNLPSVATPNGQAAFLFLLTSALAPLIRLSYGRMVWMALPYTVVLTLVGLLCVKFTLIPYTQWLMQIGILAAH</sequence>
<comment type="function">
    <text evidence="1">Na(+)/H(+) antiporter that extrudes sodium in exchange for external protons.</text>
</comment>
<comment type="catalytic activity">
    <reaction evidence="1">
        <text>2 Na(+)(in) + 3 H(+)(out) = 2 Na(+)(out) + 3 H(+)(in)</text>
        <dbReference type="Rhea" id="RHEA:29247"/>
        <dbReference type="ChEBI" id="CHEBI:15378"/>
        <dbReference type="ChEBI" id="CHEBI:29101"/>
    </reaction>
    <physiologicalReaction direction="left-to-right" evidence="1">
        <dbReference type="Rhea" id="RHEA:29248"/>
    </physiologicalReaction>
</comment>
<comment type="subcellular location">
    <subcellularLocation>
        <location evidence="1">Cell inner membrane</location>
        <topology evidence="1">Multi-pass membrane protein</topology>
    </subcellularLocation>
</comment>
<comment type="similarity">
    <text evidence="1">Belongs to the NhaB Na(+)/H(+) (TC 2.A.34) antiporter family.</text>
</comment>
<dbReference type="EMBL" id="CP000653">
    <property type="protein sequence ID" value="ABP61035.1"/>
    <property type="molecule type" value="Genomic_DNA"/>
</dbReference>
<dbReference type="RefSeq" id="WP_012017749.1">
    <property type="nucleotide sequence ID" value="NC_009436.1"/>
</dbReference>
<dbReference type="SMR" id="A4WBF5"/>
<dbReference type="STRING" id="399742.Ent638_2366"/>
<dbReference type="KEGG" id="ent:Ent638_2366"/>
<dbReference type="eggNOG" id="COG3067">
    <property type="taxonomic scope" value="Bacteria"/>
</dbReference>
<dbReference type="HOGENOM" id="CLU_041110_0_0_6"/>
<dbReference type="OrthoDB" id="5288732at2"/>
<dbReference type="Proteomes" id="UP000000230">
    <property type="component" value="Chromosome"/>
</dbReference>
<dbReference type="GO" id="GO:0005886">
    <property type="term" value="C:plasma membrane"/>
    <property type="evidence" value="ECO:0007669"/>
    <property type="project" value="UniProtKB-SubCell"/>
</dbReference>
<dbReference type="GO" id="GO:0015385">
    <property type="term" value="F:sodium:proton antiporter activity"/>
    <property type="evidence" value="ECO:0007669"/>
    <property type="project" value="InterPro"/>
</dbReference>
<dbReference type="HAMAP" id="MF_01599">
    <property type="entry name" value="NhaB"/>
    <property type="match status" value="1"/>
</dbReference>
<dbReference type="InterPro" id="IPR004671">
    <property type="entry name" value="Na+/H+_antiporter_NhaB"/>
</dbReference>
<dbReference type="NCBIfam" id="TIGR00774">
    <property type="entry name" value="NhaB"/>
    <property type="match status" value="1"/>
</dbReference>
<dbReference type="NCBIfam" id="NF007093">
    <property type="entry name" value="PRK09547.1"/>
    <property type="match status" value="1"/>
</dbReference>
<dbReference type="PANTHER" id="PTHR43302:SF1">
    <property type="entry name" value="NA(+)_H(+) ANTIPORTER NHAB"/>
    <property type="match status" value="1"/>
</dbReference>
<dbReference type="PANTHER" id="PTHR43302">
    <property type="entry name" value="TRANSPORTER ARSB-RELATED"/>
    <property type="match status" value="1"/>
</dbReference>
<dbReference type="Pfam" id="PF06450">
    <property type="entry name" value="NhaB"/>
    <property type="match status" value="1"/>
</dbReference>
<feature type="chain" id="PRO_0000333087" description="Na(+)/H(+) antiporter NhaB">
    <location>
        <begin position="1"/>
        <end position="512"/>
    </location>
</feature>
<feature type="transmembrane region" description="Helical" evidence="1">
    <location>
        <begin position="28"/>
        <end position="48"/>
    </location>
</feature>
<feature type="transmembrane region" description="Helical" evidence="1">
    <location>
        <begin position="52"/>
        <end position="72"/>
    </location>
</feature>
<feature type="transmembrane region" description="Helical" evidence="1">
    <location>
        <begin position="97"/>
        <end position="117"/>
    </location>
</feature>
<feature type="transmembrane region" description="Helical" evidence="1">
    <location>
        <begin position="144"/>
        <end position="164"/>
    </location>
</feature>
<feature type="transmembrane region" description="Helical" evidence="1">
    <location>
        <begin position="201"/>
        <end position="221"/>
    </location>
</feature>
<feature type="transmembrane region" description="Helical" evidence="1">
    <location>
        <begin position="237"/>
        <end position="257"/>
    </location>
</feature>
<feature type="transmembrane region" description="Helical" evidence="1">
    <location>
        <begin position="296"/>
        <end position="330"/>
    </location>
</feature>
<feature type="transmembrane region" description="Helical" evidence="1">
    <location>
        <begin position="347"/>
        <end position="367"/>
    </location>
</feature>
<feature type="transmembrane region" description="Helical" evidence="1">
    <location>
        <begin position="390"/>
        <end position="410"/>
    </location>
</feature>
<feature type="transmembrane region" description="Helical" evidence="1">
    <location>
        <begin position="446"/>
        <end position="466"/>
    </location>
</feature>
<feature type="transmembrane region" description="Helical" evidence="1">
    <location>
        <begin position="474"/>
        <end position="494"/>
    </location>
</feature>
<keyword id="KW-0050">Antiport</keyword>
<keyword id="KW-0997">Cell inner membrane</keyword>
<keyword id="KW-1003">Cell membrane</keyword>
<keyword id="KW-0406">Ion transport</keyword>
<keyword id="KW-0472">Membrane</keyword>
<keyword id="KW-0915">Sodium</keyword>
<keyword id="KW-0739">Sodium transport</keyword>
<keyword id="KW-0812">Transmembrane</keyword>
<keyword id="KW-1133">Transmembrane helix</keyword>
<keyword id="KW-0813">Transport</keyword>
<protein>
    <recommendedName>
        <fullName evidence="1">Na(+)/H(+) antiporter NhaB</fullName>
    </recommendedName>
    <alternativeName>
        <fullName evidence="1">Sodium/proton antiporter NhaB</fullName>
    </alternativeName>
</protein>
<name>NHAB_ENT38</name>
<organism>
    <name type="scientific">Enterobacter sp. (strain 638)</name>
    <dbReference type="NCBI Taxonomy" id="399742"/>
    <lineage>
        <taxon>Bacteria</taxon>
        <taxon>Pseudomonadati</taxon>
        <taxon>Pseudomonadota</taxon>
        <taxon>Gammaproteobacteria</taxon>
        <taxon>Enterobacterales</taxon>
        <taxon>Enterobacteriaceae</taxon>
        <taxon>Enterobacter</taxon>
    </lineage>
</organism>